<evidence type="ECO:0000250" key="1"/>
<evidence type="ECO:0000250" key="2">
    <source>
        <dbReference type="UniProtKB" id="Q8R516"/>
    </source>
</evidence>
<evidence type="ECO:0000255" key="3">
    <source>
        <dbReference type="PROSITE-ProRule" id="PRU00175"/>
    </source>
</evidence>
<evidence type="ECO:0000255" key="4">
    <source>
        <dbReference type="PROSITE-ProRule" id="PRU00228"/>
    </source>
</evidence>
<evidence type="ECO:0000255" key="5">
    <source>
        <dbReference type="PROSITE-ProRule" id="PRU00749"/>
    </source>
</evidence>
<evidence type="ECO:0000305" key="6"/>
<keyword id="KW-0040">ANK repeat</keyword>
<keyword id="KW-0963">Cytoplasm</keyword>
<keyword id="KW-0479">Metal-binding</keyword>
<keyword id="KW-0914">Notch signaling pathway</keyword>
<keyword id="KW-1185">Reference proteome</keyword>
<keyword id="KW-0677">Repeat</keyword>
<keyword id="KW-0808">Transferase</keyword>
<keyword id="KW-0833">Ubl conjugation pathway</keyword>
<keyword id="KW-0862">Zinc</keyword>
<keyword id="KW-0863">Zinc-finger</keyword>
<gene>
    <name type="primary">MIB2</name>
    <name type="ORF">RCJMB04_25j24</name>
</gene>
<name>MIB2_CHICK</name>
<sequence length="954" mass="106340">MDLDPYASMQVGMRVVRGVDWKWGSQDSGEGNVGTVVEIGRTGSPTTPDKTVVVQWDQGNRTNYRTGFQGAYDLLLYDNAQIGVRHPNIICDCCKKHGIRGMRWKCKMCFDYDLCTQCYMNNKHDLSHAFERYETAHSQPVLVSPRQNLTRITLKGTFQGAKVVRGPDWEWGNQDGGEGKTGRVVDIRGWDVETGRSVASVTWSDGTTNVYRVGHKGKVDLKCTVEASGGFYYKEHLPKLGKPAELQRKESTDRHPFQHGDKVKCLLDIDILREMQEGHGGWNPKMAEFIGQTGTVHRITDRGDVRVQFNSETRWTFHPGALTKLNTFWVGDVVRVIDDMETVKRFQPGHGEWTDEMAPTLGHIGKVIKVYGDGDLRVSVGDQSWTFNPACLTAYQRDEEANLMTTENAKESKSTLITVLEKLLSQKTESDHAGCLVIWAALNNAAKVRELLQKYPDKVDNKNQGRTALQIASYQGHLDVVKILLQAHATVNLRDEEGDTALHYAAFGNQADVARVLMAKGAGADLLNNAKCTALYVAVSQGFTEVVQALCELNCDVNLPDSHGDTPLHYAITADYKVIIEILTEVPNIDFTVQNCQGFNLLHYSALKGNKLAIKKILARARQLVDSKKEDGFTALHLAALNNHKEVAEILIKEGRCDVNVKNNRNQTPLHLAIIQGHVGLVQLLVSEGSDVNAEDEDGDTAMHIALERQQLMSVLMEKREGEMGSSLFSKLQASGFLGNVELNVGTAIACYLAQEGADINYANHRGKSPLDLITDGRIVQIIKDFSQKFREQQVSSDCSAITCSLRRVHTTPNTMTNLSVSSVAVPTECLVCSELALLIHFFPCQHSIVCEECSRRMKKCIKCQVTITKKLKRDSTEVECSPSSESTDQRKLMEELQNRYRQMEERITCPICIDDQIKLVFQCGHGSCPDCSTALTVCPICRQAIRERIQIFV</sequence>
<dbReference type="EC" id="2.3.2.27"/>
<dbReference type="EMBL" id="AJ720785">
    <property type="protein sequence ID" value="CAG32444.1"/>
    <property type="molecule type" value="mRNA"/>
</dbReference>
<dbReference type="RefSeq" id="NP_001006301.1">
    <property type="nucleotide sequence ID" value="NM_001006301.1"/>
</dbReference>
<dbReference type="SMR" id="Q5ZIJ9"/>
<dbReference type="FunCoup" id="Q5ZIJ9">
    <property type="interactions" value="1411"/>
</dbReference>
<dbReference type="STRING" id="9031.ENSGALP00000002233"/>
<dbReference type="PaxDb" id="9031-ENSGALP00000002233"/>
<dbReference type="GeneID" id="419408"/>
<dbReference type="KEGG" id="gga:419408"/>
<dbReference type="CTD" id="142678"/>
<dbReference type="VEuPathDB" id="HostDB:geneid_419408"/>
<dbReference type="eggNOG" id="KOG0504">
    <property type="taxonomic scope" value="Eukaryota"/>
</dbReference>
<dbReference type="eggNOG" id="KOG4582">
    <property type="taxonomic scope" value="Eukaryota"/>
</dbReference>
<dbReference type="InParanoid" id="Q5ZIJ9"/>
<dbReference type="OrthoDB" id="2122982at2759"/>
<dbReference type="PhylomeDB" id="Q5ZIJ9"/>
<dbReference type="UniPathway" id="UPA00143"/>
<dbReference type="PRO" id="PR:Q5ZIJ9"/>
<dbReference type="Proteomes" id="UP000000539">
    <property type="component" value="Unassembled WGS sequence"/>
</dbReference>
<dbReference type="GO" id="GO:0005737">
    <property type="term" value="C:cytoplasm"/>
    <property type="evidence" value="ECO:0000318"/>
    <property type="project" value="GO_Central"/>
</dbReference>
<dbReference type="GO" id="GO:0061630">
    <property type="term" value="F:ubiquitin protein ligase activity"/>
    <property type="evidence" value="ECO:0000318"/>
    <property type="project" value="GO_Central"/>
</dbReference>
<dbReference type="GO" id="GO:0008270">
    <property type="term" value="F:zinc ion binding"/>
    <property type="evidence" value="ECO:0007669"/>
    <property type="project" value="UniProtKB-KW"/>
</dbReference>
<dbReference type="GO" id="GO:0007219">
    <property type="term" value="P:Notch signaling pathway"/>
    <property type="evidence" value="ECO:0007669"/>
    <property type="project" value="UniProtKB-KW"/>
</dbReference>
<dbReference type="GO" id="GO:0016567">
    <property type="term" value="P:protein ubiquitination"/>
    <property type="evidence" value="ECO:0000318"/>
    <property type="project" value="GO_Central"/>
</dbReference>
<dbReference type="CDD" id="cd16726">
    <property type="entry name" value="RING-HC_MIB2_rpt1"/>
    <property type="match status" value="1"/>
</dbReference>
<dbReference type="CDD" id="cd16728">
    <property type="entry name" value="RING-HC_MIB2_rpt2"/>
    <property type="match status" value="1"/>
</dbReference>
<dbReference type="CDD" id="cd02339">
    <property type="entry name" value="ZZ_Mind_bomb"/>
    <property type="match status" value="1"/>
</dbReference>
<dbReference type="FunFam" id="3.30.40.10:FF:000094">
    <property type="entry name" value="E3 ubiquitin-protein ligase MIB2 isoform X1"/>
    <property type="match status" value="1"/>
</dbReference>
<dbReference type="FunFam" id="2.30.30.40:FF:000044">
    <property type="entry name" value="E3 ubiquitin-protein ligase MIB2, putative"/>
    <property type="match status" value="1"/>
</dbReference>
<dbReference type="FunFam" id="1.25.40.20:FF:000110">
    <property type="entry name" value="Mindbomb E3 ubiquitin protein ligase 2"/>
    <property type="match status" value="1"/>
</dbReference>
<dbReference type="FunFam" id="3.30.40.10:FF:000261">
    <property type="entry name" value="Mindbomb E3 ubiquitin protein ligase 2"/>
    <property type="match status" value="1"/>
</dbReference>
<dbReference type="FunFam" id="3.30.60.90:FF:000004">
    <property type="entry name" value="Putative E3 ubiquitin-protein ligase MIB2"/>
    <property type="match status" value="1"/>
</dbReference>
<dbReference type="FunFam" id="2.30.30.40:FF:000078">
    <property type="entry name" value="Putative e3 ubiquitin-protein ligase mib2"/>
    <property type="match status" value="1"/>
</dbReference>
<dbReference type="Gene3D" id="3.30.60.90">
    <property type="match status" value="1"/>
</dbReference>
<dbReference type="Gene3D" id="1.25.40.20">
    <property type="entry name" value="Ankyrin repeat-containing domain"/>
    <property type="match status" value="2"/>
</dbReference>
<dbReference type="Gene3D" id="2.30.30.40">
    <property type="entry name" value="SH3 Domains"/>
    <property type="match status" value="2"/>
</dbReference>
<dbReference type="Gene3D" id="3.30.40.10">
    <property type="entry name" value="Zinc/RING finger domain, C3HC4 (zinc finger)"/>
    <property type="match status" value="2"/>
</dbReference>
<dbReference type="InterPro" id="IPR002110">
    <property type="entry name" value="Ankyrin_rpt"/>
</dbReference>
<dbReference type="InterPro" id="IPR036770">
    <property type="entry name" value="Ankyrin_rpt-contain_sf"/>
</dbReference>
<dbReference type="InterPro" id="IPR042056">
    <property type="entry name" value="MIB1/2_ZZ"/>
</dbReference>
<dbReference type="InterPro" id="IPR010606">
    <property type="entry name" value="Mib_Herc2"/>
</dbReference>
<dbReference type="InterPro" id="IPR037252">
    <property type="entry name" value="Mib_Herc2_sf"/>
</dbReference>
<dbReference type="InterPro" id="IPR040847">
    <property type="entry name" value="SH3_15"/>
</dbReference>
<dbReference type="InterPro" id="IPR001841">
    <property type="entry name" value="Znf_RING"/>
</dbReference>
<dbReference type="InterPro" id="IPR013083">
    <property type="entry name" value="Znf_RING/FYVE/PHD"/>
</dbReference>
<dbReference type="InterPro" id="IPR000433">
    <property type="entry name" value="Znf_ZZ"/>
</dbReference>
<dbReference type="InterPro" id="IPR043145">
    <property type="entry name" value="Znf_ZZ_sf"/>
</dbReference>
<dbReference type="PANTHER" id="PTHR24202">
    <property type="entry name" value="E3 UBIQUITIN-PROTEIN LIGASE MIB2"/>
    <property type="match status" value="1"/>
</dbReference>
<dbReference type="PANTHER" id="PTHR24202:SF4">
    <property type="entry name" value="E3 UBIQUITIN-PROTEIN LIGASE MIB2-RELATED"/>
    <property type="match status" value="1"/>
</dbReference>
<dbReference type="Pfam" id="PF00023">
    <property type="entry name" value="Ank"/>
    <property type="match status" value="1"/>
</dbReference>
<dbReference type="Pfam" id="PF12796">
    <property type="entry name" value="Ank_2"/>
    <property type="match status" value="2"/>
</dbReference>
<dbReference type="Pfam" id="PF13857">
    <property type="entry name" value="Ank_5"/>
    <property type="match status" value="1"/>
</dbReference>
<dbReference type="Pfam" id="PF06701">
    <property type="entry name" value="MIB_HERC2"/>
    <property type="match status" value="2"/>
</dbReference>
<dbReference type="Pfam" id="PF18346">
    <property type="entry name" value="SH3_15"/>
    <property type="match status" value="2"/>
</dbReference>
<dbReference type="Pfam" id="PF13920">
    <property type="entry name" value="zf-C3HC4_3"/>
    <property type="match status" value="2"/>
</dbReference>
<dbReference type="Pfam" id="PF00569">
    <property type="entry name" value="ZZ"/>
    <property type="match status" value="1"/>
</dbReference>
<dbReference type="PRINTS" id="PR01415">
    <property type="entry name" value="ANKYRIN"/>
</dbReference>
<dbReference type="SMART" id="SM00248">
    <property type="entry name" value="ANK"/>
    <property type="match status" value="8"/>
</dbReference>
<dbReference type="SMART" id="SM00184">
    <property type="entry name" value="RING"/>
    <property type="match status" value="2"/>
</dbReference>
<dbReference type="SMART" id="SM00291">
    <property type="entry name" value="ZnF_ZZ"/>
    <property type="match status" value="1"/>
</dbReference>
<dbReference type="SUPFAM" id="SSF48403">
    <property type="entry name" value="Ankyrin repeat"/>
    <property type="match status" value="1"/>
</dbReference>
<dbReference type="SUPFAM" id="SSF159034">
    <property type="entry name" value="Mib/herc2 domain-like"/>
    <property type="match status" value="2"/>
</dbReference>
<dbReference type="SUPFAM" id="SSF57850">
    <property type="entry name" value="RING/U-box"/>
    <property type="match status" value="2"/>
</dbReference>
<dbReference type="PROSITE" id="PS50297">
    <property type="entry name" value="ANK_REP_REGION"/>
    <property type="match status" value="1"/>
</dbReference>
<dbReference type="PROSITE" id="PS50088">
    <property type="entry name" value="ANK_REPEAT"/>
    <property type="match status" value="5"/>
</dbReference>
<dbReference type="PROSITE" id="PS51416">
    <property type="entry name" value="MIB_HERC2"/>
    <property type="match status" value="2"/>
</dbReference>
<dbReference type="PROSITE" id="PS50089">
    <property type="entry name" value="ZF_RING_2"/>
    <property type="match status" value="1"/>
</dbReference>
<dbReference type="PROSITE" id="PS01357">
    <property type="entry name" value="ZF_ZZ_1"/>
    <property type="match status" value="1"/>
</dbReference>
<dbReference type="PROSITE" id="PS50135">
    <property type="entry name" value="ZF_ZZ_2"/>
    <property type="match status" value="1"/>
</dbReference>
<protein>
    <recommendedName>
        <fullName>E3 ubiquitin-protein ligase MIB2</fullName>
        <ecNumber>2.3.2.27</ecNumber>
    </recommendedName>
    <alternativeName>
        <fullName>Mind bomb homolog 2</fullName>
    </alternativeName>
    <alternativeName>
        <fullName evidence="6">RING-type E3 ubiquitin transferase MIB2</fullName>
    </alternativeName>
</protein>
<reference key="1">
    <citation type="journal article" date="2005" name="Genome Biol.">
        <title>Full-length cDNAs from chicken bursal lymphocytes to facilitate gene function analysis.</title>
        <authorList>
            <person name="Caldwell R.B."/>
            <person name="Kierzek A.M."/>
            <person name="Arakawa H."/>
            <person name="Bezzubov Y."/>
            <person name="Zaim J."/>
            <person name="Fiedler P."/>
            <person name="Kutter S."/>
            <person name="Blagodatski A."/>
            <person name="Kostovska D."/>
            <person name="Koter M."/>
            <person name="Plachy J."/>
            <person name="Carninci P."/>
            <person name="Hayashizaki Y."/>
            <person name="Buerstedde J.-M."/>
        </authorList>
    </citation>
    <scope>NUCLEOTIDE SEQUENCE [LARGE SCALE MRNA]</scope>
    <source>
        <strain>CB</strain>
        <tissue>Bursa of Fabricius</tissue>
    </source>
</reference>
<organism>
    <name type="scientific">Gallus gallus</name>
    <name type="common">Chicken</name>
    <dbReference type="NCBI Taxonomy" id="9031"/>
    <lineage>
        <taxon>Eukaryota</taxon>
        <taxon>Metazoa</taxon>
        <taxon>Chordata</taxon>
        <taxon>Craniata</taxon>
        <taxon>Vertebrata</taxon>
        <taxon>Euteleostomi</taxon>
        <taxon>Archelosauria</taxon>
        <taxon>Archosauria</taxon>
        <taxon>Dinosauria</taxon>
        <taxon>Saurischia</taxon>
        <taxon>Theropoda</taxon>
        <taxon>Coelurosauria</taxon>
        <taxon>Aves</taxon>
        <taxon>Neognathae</taxon>
        <taxon>Galloanserae</taxon>
        <taxon>Galliformes</taxon>
        <taxon>Phasianidae</taxon>
        <taxon>Phasianinae</taxon>
        <taxon>Gallus</taxon>
    </lineage>
</organism>
<proteinExistence type="evidence at transcript level"/>
<accession>Q5ZIJ9</accession>
<feature type="chain" id="PRO_0000055950" description="E3 ubiquitin-protein ligase MIB2">
    <location>
        <begin position="1"/>
        <end position="954"/>
    </location>
</feature>
<feature type="domain" description="MIB/HERC2 1" evidence="5">
    <location>
        <begin position="1"/>
        <end position="80"/>
    </location>
</feature>
<feature type="domain" description="MIB/HERC2 2" evidence="5">
    <location>
        <begin position="149"/>
        <end position="227"/>
    </location>
</feature>
<feature type="repeat" description="ANK 1">
    <location>
        <begin position="464"/>
        <end position="493"/>
    </location>
</feature>
<feature type="repeat" description="ANK 2">
    <location>
        <begin position="497"/>
        <end position="526"/>
    </location>
</feature>
<feature type="repeat" description="ANK 3">
    <location>
        <begin position="530"/>
        <end position="559"/>
    </location>
</feature>
<feature type="repeat" description="ANK 4">
    <location>
        <begin position="563"/>
        <end position="591"/>
    </location>
</feature>
<feature type="repeat" description="ANK 5">
    <location>
        <begin position="597"/>
        <end position="626"/>
    </location>
</feature>
<feature type="repeat" description="ANK 6">
    <location>
        <begin position="631"/>
        <end position="661"/>
    </location>
</feature>
<feature type="repeat" description="ANK 7">
    <location>
        <begin position="665"/>
        <end position="694"/>
    </location>
</feature>
<feature type="repeat" description="ANK 8">
    <location>
        <begin position="698"/>
        <end position="726"/>
    </location>
</feature>
<feature type="repeat" description="ANK 9">
    <location>
        <begin position="766"/>
        <end position="795"/>
    </location>
</feature>
<feature type="zinc finger region" description="ZZ-type" evidence="4">
    <location>
        <begin position="86"/>
        <end position="138"/>
    </location>
</feature>
<feature type="zinc finger region" description="RING-type 1" evidence="3">
    <location>
        <begin position="830"/>
        <end position="865"/>
    </location>
</feature>
<feature type="zinc finger region" description="RING-type 2" evidence="3">
    <location>
        <begin position="910"/>
        <end position="943"/>
    </location>
</feature>
<feature type="binding site" evidence="4">
    <location>
        <position position="91"/>
    </location>
    <ligand>
        <name>Zn(2+)</name>
        <dbReference type="ChEBI" id="CHEBI:29105"/>
        <label>1</label>
    </ligand>
</feature>
<feature type="binding site" evidence="4">
    <location>
        <position position="94"/>
    </location>
    <ligand>
        <name>Zn(2+)</name>
        <dbReference type="ChEBI" id="CHEBI:29105"/>
        <label>1</label>
    </ligand>
</feature>
<feature type="binding site" evidence="4">
    <location>
        <position position="106"/>
    </location>
    <ligand>
        <name>Zn(2+)</name>
        <dbReference type="ChEBI" id="CHEBI:29105"/>
        <label>2</label>
    </ligand>
</feature>
<feature type="binding site" evidence="4">
    <location>
        <position position="109"/>
    </location>
    <ligand>
        <name>Zn(2+)</name>
        <dbReference type="ChEBI" id="CHEBI:29105"/>
        <label>2</label>
    </ligand>
</feature>
<feature type="binding site" evidence="4">
    <location>
        <position position="115"/>
    </location>
    <ligand>
        <name>Zn(2+)</name>
        <dbReference type="ChEBI" id="CHEBI:29105"/>
        <label>1</label>
    </ligand>
</feature>
<feature type="binding site" evidence="4">
    <location>
        <position position="118"/>
    </location>
    <ligand>
        <name>Zn(2+)</name>
        <dbReference type="ChEBI" id="CHEBI:29105"/>
        <label>1</label>
    </ligand>
</feature>
<feature type="binding site" evidence="4">
    <location>
        <position position="124"/>
    </location>
    <ligand>
        <name>Zn(2+)</name>
        <dbReference type="ChEBI" id="CHEBI:29105"/>
        <label>2</label>
    </ligand>
</feature>
<feature type="binding site" evidence="4">
    <location>
        <position position="128"/>
    </location>
    <ligand>
        <name>Zn(2+)</name>
        <dbReference type="ChEBI" id="CHEBI:29105"/>
        <label>2</label>
    </ligand>
</feature>
<comment type="function">
    <text evidence="2">E3 ubiquitin-protein ligase that mediates ubiquitination of Delta receptors, which act as ligands of Notch proteins. Positively regulates the Delta-mediated Notch signaling by ubiquitinating the intracellular domain of Delta, leading to endocytosis of Delta receptors.</text>
</comment>
<comment type="catalytic activity">
    <reaction>
        <text>S-ubiquitinyl-[E2 ubiquitin-conjugating enzyme]-L-cysteine + [acceptor protein]-L-lysine = [E2 ubiquitin-conjugating enzyme]-L-cysteine + N(6)-ubiquitinyl-[acceptor protein]-L-lysine.</text>
        <dbReference type="EC" id="2.3.2.27"/>
    </reaction>
</comment>
<comment type="pathway">
    <text>Protein modification; protein ubiquitination.</text>
</comment>
<comment type="subcellular location">
    <subcellularLocation>
        <location evidence="1">Cytoplasm</location>
    </subcellularLocation>
</comment>